<gene>
    <name evidence="1" type="primary">nadK</name>
    <name type="ordered locus">XOO2312</name>
</gene>
<accession>Q2P310</accession>
<proteinExistence type="inferred from homology"/>
<comment type="function">
    <text evidence="1">Involved in the regulation of the intracellular balance of NAD and NADP, and is a key enzyme in the biosynthesis of NADP. Catalyzes specifically the phosphorylation on 2'-hydroxyl of the adenosine moiety of NAD to yield NADP.</text>
</comment>
<comment type="catalytic activity">
    <reaction evidence="1">
        <text>NAD(+) + ATP = ADP + NADP(+) + H(+)</text>
        <dbReference type="Rhea" id="RHEA:18629"/>
        <dbReference type="ChEBI" id="CHEBI:15378"/>
        <dbReference type="ChEBI" id="CHEBI:30616"/>
        <dbReference type="ChEBI" id="CHEBI:57540"/>
        <dbReference type="ChEBI" id="CHEBI:58349"/>
        <dbReference type="ChEBI" id="CHEBI:456216"/>
        <dbReference type="EC" id="2.7.1.23"/>
    </reaction>
</comment>
<comment type="cofactor">
    <cofactor evidence="1">
        <name>a divalent metal cation</name>
        <dbReference type="ChEBI" id="CHEBI:60240"/>
    </cofactor>
</comment>
<comment type="subcellular location">
    <subcellularLocation>
        <location evidence="1">Cytoplasm</location>
    </subcellularLocation>
</comment>
<comment type="similarity">
    <text evidence="1">Belongs to the NAD kinase family.</text>
</comment>
<keyword id="KW-0067">ATP-binding</keyword>
<keyword id="KW-0963">Cytoplasm</keyword>
<keyword id="KW-0418">Kinase</keyword>
<keyword id="KW-0520">NAD</keyword>
<keyword id="KW-0521">NADP</keyword>
<keyword id="KW-0547">Nucleotide-binding</keyword>
<keyword id="KW-0808">Transferase</keyword>
<feature type="chain" id="PRO_0000229714" description="NAD kinase">
    <location>
        <begin position="1"/>
        <end position="258"/>
    </location>
</feature>
<feature type="active site" description="Proton acceptor" evidence="1">
    <location>
        <position position="45"/>
    </location>
</feature>
<feature type="binding site" evidence="1">
    <location>
        <begin position="45"/>
        <end position="46"/>
    </location>
    <ligand>
        <name>NAD(+)</name>
        <dbReference type="ChEBI" id="CHEBI:57540"/>
    </ligand>
</feature>
<feature type="binding site" evidence="1">
    <location>
        <begin position="117"/>
        <end position="118"/>
    </location>
    <ligand>
        <name>NAD(+)</name>
        <dbReference type="ChEBI" id="CHEBI:57540"/>
    </ligand>
</feature>
<feature type="binding site" evidence="1">
    <location>
        <position position="147"/>
    </location>
    <ligand>
        <name>NAD(+)</name>
        <dbReference type="ChEBI" id="CHEBI:57540"/>
    </ligand>
</feature>
<feature type="binding site" evidence="1">
    <location>
        <position position="155"/>
    </location>
    <ligand>
        <name>NAD(+)</name>
        <dbReference type="ChEBI" id="CHEBI:57540"/>
    </ligand>
</feature>
<feature type="binding site" evidence="1">
    <location>
        <begin position="158"/>
        <end position="163"/>
    </location>
    <ligand>
        <name>NAD(+)</name>
        <dbReference type="ChEBI" id="CHEBI:57540"/>
    </ligand>
</feature>
<feature type="binding site" evidence="1">
    <location>
        <position position="182"/>
    </location>
    <ligand>
        <name>NAD(+)</name>
        <dbReference type="ChEBI" id="CHEBI:57540"/>
    </ligand>
</feature>
<organism>
    <name type="scientific">Xanthomonas oryzae pv. oryzae (strain MAFF 311018)</name>
    <dbReference type="NCBI Taxonomy" id="342109"/>
    <lineage>
        <taxon>Bacteria</taxon>
        <taxon>Pseudomonadati</taxon>
        <taxon>Pseudomonadota</taxon>
        <taxon>Gammaproteobacteria</taxon>
        <taxon>Lysobacterales</taxon>
        <taxon>Lysobacteraceae</taxon>
        <taxon>Xanthomonas</taxon>
    </lineage>
</organism>
<dbReference type="EC" id="2.7.1.23" evidence="1"/>
<dbReference type="EMBL" id="AP008229">
    <property type="protein sequence ID" value="BAE69067.1"/>
    <property type="molecule type" value="Genomic_DNA"/>
</dbReference>
<dbReference type="RefSeq" id="WP_011408609.1">
    <property type="nucleotide sequence ID" value="NC_007705.1"/>
</dbReference>
<dbReference type="SMR" id="Q2P310"/>
<dbReference type="KEGG" id="xom:XOO2312"/>
<dbReference type="HOGENOM" id="CLU_073319_0_0_6"/>
<dbReference type="GO" id="GO:0005737">
    <property type="term" value="C:cytoplasm"/>
    <property type="evidence" value="ECO:0007669"/>
    <property type="project" value="UniProtKB-SubCell"/>
</dbReference>
<dbReference type="GO" id="GO:0005524">
    <property type="term" value="F:ATP binding"/>
    <property type="evidence" value="ECO:0007669"/>
    <property type="project" value="UniProtKB-KW"/>
</dbReference>
<dbReference type="GO" id="GO:0046872">
    <property type="term" value="F:metal ion binding"/>
    <property type="evidence" value="ECO:0007669"/>
    <property type="project" value="UniProtKB-UniRule"/>
</dbReference>
<dbReference type="GO" id="GO:0051287">
    <property type="term" value="F:NAD binding"/>
    <property type="evidence" value="ECO:0007669"/>
    <property type="project" value="UniProtKB-ARBA"/>
</dbReference>
<dbReference type="GO" id="GO:0003951">
    <property type="term" value="F:NAD+ kinase activity"/>
    <property type="evidence" value="ECO:0007669"/>
    <property type="project" value="UniProtKB-UniRule"/>
</dbReference>
<dbReference type="GO" id="GO:0019674">
    <property type="term" value="P:NAD metabolic process"/>
    <property type="evidence" value="ECO:0007669"/>
    <property type="project" value="InterPro"/>
</dbReference>
<dbReference type="GO" id="GO:0006741">
    <property type="term" value="P:NADP biosynthetic process"/>
    <property type="evidence" value="ECO:0007669"/>
    <property type="project" value="UniProtKB-UniRule"/>
</dbReference>
<dbReference type="FunFam" id="2.60.200.30:FF:000012">
    <property type="entry name" value="NAD kinase"/>
    <property type="match status" value="1"/>
</dbReference>
<dbReference type="Gene3D" id="3.40.50.10330">
    <property type="entry name" value="Probable inorganic polyphosphate/atp-NAD kinase, domain 1"/>
    <property type="match status" value="1"/>
</dbReference>
<dbReference type="Gene3D" id="2.60.200.30">
    <property type="entry name" value="Probable inorganic polyphosphate/atp-NAD kinase, domain 2"/>
    <property type="match status" value="1"/>
</dbReference>
<dbReference type="HAMAP" id="MF_00361">
    <property type="entry name" value="NAD_kinase"/>
    <property type="match status" value="1"/>
</dbReference>
<dbReference type="InterPro" id="IPR017438">
    <property type="entry name" value="ATP-NAD_kinase_N"/>
</dbReference>
<dbReference type="InterPro" id="IPR017437">
    <property type="entry name" value="ATP-NAD_kinase_PpnK-typ_C"/>
</dbReference>
<dbReference type="InterPro" id="IPR016064">
    <property type="entry name" value="NAD/diacylglycerol_kinase_sf"/>
</dbReference>
<dbReference type="InterPro" id="IPR002504">
    <property type="entry name" value="NADK"/>
</dbReference>
<dbReference type="NCBIfam" id="NF003406">
    <property type="entry name" value="PRK04761.1"/>
    <property type="match status" value="1"/>
</dbReference>
<dbReference type="PANTHER" id="PTHR20275">
    <property type="entry name" value="NAD KINASE"/>
    <property type="match status" value="1"/>
</dbReference>
<dbReference type="PANTHER" id="PTHR20275:SF0">
    <property type="entry name" value="NAD KINASE"/>
    <property type="match status" value="1"/>
</dbReference>
<dbReference type="Pfam" id="PF20143">
    <property type="entry name" value="NAD_kinase_C"/>
    <property type="match status" value="1"/>
</dbReference>
<dbReference type="SUPFAM" id="SSF111331">
    <property type="entry name" value="NAD kinase/diacylglycerol kinase-like"/>
    <property type="match status" value="1"/>
</dbReference>
<sequence length="258" mass="28398">MTAPPRIAFLASPAEPAVAARARLVQRFGDHALDCADIVCALGGDGFMLQTLHRHGASNKPVFGMKLGSVGFLMNQYRDDEDDLLERLQRAEPAYLRPLEMQVQTESGASAGSLAYNEVSLLRQTRQAAHLSIDLNGQTRIAELIGDGVMVATPAGSTAYNYSAHGPILPLGSHTLALTPIAPYRPRRWRGAILKADTAVRFRVLDPYKRPVSVTADSHEIRDVVEVTIRESTQRQVTLLFDPEHNLEERIFSEQFAV</sequence>
<reference key="1">
    <citation type="journal article" date="2005" name="Jpn. Agric. Res. Q.">
        <title>Genome sequence of Xanthomonas oryzae pv. oryzae suggests contribution of large numbers of effector genes and insertion sequences to its race diversity.</title>
        <authorList>
            <person name="Ochiai H."/>
            <person name="Inoue Y."/>
            <person name="Takeya M."/>
            <person name="Sasaki A."/>
            <person name="Kaku H."/>
        </authorList>
    </citation>
    <scope>NUCLEOTIDE SEQUENCE [LARGE SCALE GENOMIC DNA]</scope>
    <source>
        <strain>MAFF 311018</strain>
    </source>
</reference>
<protein>
    <recommendedName>
        <fullName evidence="1">NAD kinase</fullName>
        <ecNumber evidence="1">2.7.1.23</ecNumber>
    </recommendedName>
    <alternativeName>
        <fullName evidence="1">ATP-dependent NAD kinase</fullName>
    </alternativeName>
</protein>
<evidence type="ECO:0000255" key="1">
    <source>
        <dbReference type="HAMAP-Rule" id="MF_00361"/>
    </source>
</evidence>
<name>NADK_XANOM</name>